<protein>
    <recommendedName>
        <fullName evidence="3">Protein leg1a</fullName>
        <shortName evidence="3">Leg1-A</shortName>
    </recommendedName>
    <alternativeName>
        <fullName evidence="3">Liver-enriched gene protein 1-A</fullName>
    </alternativeName>
</protein>
<feature type="signal peptide" evidence="1">
    <location>
        <begin position="1"/>
        <end position="22"/>
    </location>
</feature>
<feature type="chain" id="PRO_0000432356" description="Protein leg1a">
    <location>
        <begin position="23"/>
        <end position="364"/>
    </location>
</feature>
<feature type="glycosylation site" description="N-linked (GlcNAc...) asparagine" evidence="1">
    <location>
        <position position="70"/>
    </location>
</feature>
<gene>
    <name evidence="3" type="primary">leg1a</name>
    <name type="ORF">zgc:172246</name>
</gene>
<sequence length="364" mass="39932">MSEMGFLRSVAAVLLLAVFSHAAVVTENGLPIQWGKAPSDLSHLPISDTGVQVNPWDYSQRMTMYKMLINATNAYMSSMGPGEQENPLWSLPLQLGWKLKSGRLADPTLDSSSTCGSEASDPVCISPLSWFACVNYYLSVLPFLAAVETGVVSSGGHQVLIQVPAEVAQDYCSSYSDCSTKHPNAMAKWHLFFQSLRQVSQSEDSDFNKKDSILGLMWAAEEESLQTASGACTERQKLYSSPEVSFQQSWLNSAAFVSAAHFHANIERSEKFMAPLPSRVLQEADSPPNIADLSTEENHTLYIFGWMNSVNQLLGGSLVNLWRKAMCSAQAREKGQALLHDLILDPKFPGSSLWSILSEMSTSC</sequence>
<proteinExistence type="evidence at protein level"/>
<accession>A5PF61</accession>
<name>LEG1A_DANRE</name>
<comment type="function">
    <text evidence="2">Important for early development of liver, exocrine pancreas and intestine, probably through cell cycle regulation. In liver, its function is partially redundant with leg1b function.</text>
</comment>
<comment type="subcellular location">
    <subcellularLocation>
        <location evidence="2">Secreted</location>
    </subcellularLocation>
</comment>
<comment type="tissue specificity">
    <text evidence="2">Detected in all tissues tested, with the highest levels in serum (at protein level). At mRNA level, only expressed in liver.</text>
</comment>
<comment type="developmental stage">
    <text evidence="2">Expressed as early as 24 hours post fecondation (hpf), expressed at higher levels than leg1b.</text>
</comment>
<comment type="disruption phenotype">
    <text evidence="2">Morpholino knockdown of the protein causes a small liver phenotype. Morpholino which can simultaneously block the translation of leg1a and leg1b, causes a more severe small liver phenotype with hypoplastic exocrine pancreas and intestinal tube as well.</text>
</comment>
<comment type="similarity">
    <text evidence="4">Belongs to the LEG1 family.</text>
</comment>
<evidence type="ECO:0000255" key="1"/>
<evidence type="ECO:0000269" key="2">
    <source>
    </source>
</evidence>
<evidence type="ECO:0000303" key="3">
    <source>
    </source>
</evidence>
<evidence type="ECO:0000305" key="4"/>
<organism>
    <name type="scientific">Danio rerio</name>
    <name type="common">Zebrafish</name>
    <name type="synonym">Brachydanio rerio</name>
    <dbReference type="NCBI Taxonomy" id="7955"/>
    <lineage>
        <taxon>Eukaryota</taxon>
        <taxon>Metazoa</taxon>
        <taxon>Chordata</taxon>
        <taxon>Craniata</taxon>
        <taxon>Vertebrata</taxon>
        <taxon>Euteleostomi</taxon>
        <taxon>Actinopterygii</taxon>
        <taxon>Neopterygii</taxon>
        <taxon>Teleostei</taxon>
        <taxon>Ostariophysi</taxon>
        <taxon>Cypriniformes</taxon>
        <taxon>Danionidae</taxon>
        <taxon>Danioninae</taxon>
        <taxon>Danio</taxon>
    </lineage>
</organism>
<keyword id="KW-0217">Developmental protein</keyword>
<keyword id="KW-0325">Glycoprotein</keyword>
<keyword id="KW-1185">Reference proteome</keyword>
<keyword id="KW-0964">Secreted</keyword>
<keyword id="KW-0732">Signal</keyword>
<reference key="1">
    <citation type="journal article" date="2013" name="Nature">
        <title>The zebrafish reference genome sequence and its relationship to the human genome.</title>
        <authorList>
            <person name="Howe K."/>
            <person name="Clark M.D."/>
            <person name="Torroja C.F."/>
            <person name="Torrance J."/>
            <person name="Berthelot C."/>
            <person name="Muffato M."/>
            <person name="Collins J.E."/>
            <person name="Humphray S."/>
            <person name="McLaren K."/>
            <person name="Matthews L."/>
            <person name="McLaren S."/>
            <person name="Sealy I."/>
            <person name="Caccamo M."/>
            <person name="Churcher C."/>
            <person name="Scott C."/>
            <person name="Barrett J.C."/>
            <person name="Koch R."/>
            <person name="Rauch G.J."/>
            <person name="White S."/>
            <person name="Chow W."/>
            <person name="Kilian B."/>
            <person name="Quintais L.T."/>
            <person name="Guerra-Assuncao J.A."/>
            <person name="Zhou Y."/>
            <person name="Gu Y."/>
            <person name="Yen J."/>
            <person name="Vogel J.H."/>
            <person name="Eyre T."/>
            <person name="Redmond S."/>
            <person name="Banerjee R."/>
            <person name="Chi J."/>
            <person name="Fu B."/>
            <person name="Langley E."/>
            <person name="Maguire S.F."/>
            <person name="Laird G.K."/>
            <person name="Lloyd D."/>
            <person name="Kenyon E."/>
            <person name="Donaldson S."/>
            <person name="Sehra H."/>
            <person name="Almeida-King J."/>
            <person name="Loveland J."/>
            <person name="Trevanion S."/>
            <person name="Jones M."/>
            <person name="Quail M."/>
            <person name="Willey D."/>
            <person name="Hunt A."/>
            <person name="Burton J."/>
            <person name="Sims S."/>
            <person name="McLay K."/>
            <person name="Plumb B."/>
            <person name="Davis J."/>
            <person name="Clee C."/>
            <person name="Oliver K."/>
            <person name="Clark R."/>
            <person name="Riddle C."/>
            <person name="Elliot D."/>
            <person name="Threadgold G."/>
            <person name="Harden G."/>
            <person name="Ware D."/>
            <person name="Begum S."/>
            <person name="Mortimore B."/>
            <person name="Kerry G."/>
            <person name="Heath P."/>
            <person name="Phillimore B."/>
            <person name="Tracey A."/>
            <person name="Corby N."/>
            <person name="Dunn M."/>
            <person name="Johnson C."/>
            <person name="Wood J."/>
            <person name="Clark S."/>
            <person name="Pelan S."/>
            <person name="Griffiths G."/>
            <person name="Smith M."/>
            <person name="Glithero R."/>
            <person name="Howden P."/>
            <person name="Barker N."/>
            <person name="Lloyd C."/>
            <person name="Stevens C."/>
            <person name="Harley J."/>
            <person name="Holt K."/>
            <person name="Panagiotidis G."/>
            <person name="Lovell J."/>
            <person name="Beasley H."/>
            <person name="Henderson C."/>
            <person name="Gordon D."/>
            <person name="Auger K."/>
            <person name="Wright D."/>
            <person name="Collins J."/>
            <person name="Raisen C."/>
            <person name="Dyer L."/>
            <person name="Leung K."/>
            <person name="Robertson L."/>
            <person name="Ambridge K."/>
            <person name="Leongamornlert D."/>
            <person name="McGuire S."/>
            <person name="Gilderthorp R."/>
            <person name="Griffiths C."/>
            <person name="Manthravadi D."/>
            <person name="Nichol S."/>
            <person name="Barker G."/>
            <person name="Whitehead S."/>
            <person name="Kay M."/>
            <person name="Brown J."/>
            <person name="Murnane C."/>
            <person name="Gray E."/>
            <person name="Humphries M."/>
            <person name="Sycamore N."/>
            <person name="Barker D."/>
            <person name="Saunders D."/>
            <person name="Wallis J."/>
            <person name="Babbage A."/>
            <person name="Hammond S."/>
            <person name="Mashreghi-Mohammadi M."/>
            <person name="Barr L."/>
            <person name="Martin S."/>
            <person name="Wray P."/>
            <person name="Ellington A."/>
            <person name="Matthews N."/>
            <person name="Ellwood M."/>
            <person name="Woodmansey R."/>
            <person name="Clark G."/>
            <person name="Cooper J."/>
            <person name="Tromans A."/>
            <person name="Grafham D."/>
            <person name="Skuce C."/>
            <person name="Pandian R."/>
            <person name="Andrews R."/>
            <person name="Harrison E."/>
            <person name="Kimberley A."/>
            <person name="Garnett J."/>
            <person name="Fosker N."/>
            <person name="Hall R."/>
            <person name="Garner P."/>
            <person name="Kelly D."/>
            <person name="Bird C."/>
            <person name="Palmer S."/>
            <person name="Gehring I."/>
            <person name="Berger A."/>
            <person name="Dooley C.M."/>
            <person name="Ersan-Urun Z."/>
            <person name="Eser C."/>
            <person name="Geiger H."/>
            <person name="Geisler M."/>
            <person name="Karotki L."/>
            <person name="Kirn A."/>
            <person name="Konantz J."/>
            <person name="Konantz M."/>
            <person name="Oberlander M."/>
            <person name="Rudolph-Geiger S."/>
            <person name="Teucke M."/>
            <person name="Lanz C."/>
            <person name="Raddatz G."/>
            <person name="Osoegawa K."/>
            <person name="Zhu B."/>
            <person name="Rapp A."/>
            <person name="Widaa S."/>
            <person name="Langford C."/>
            <person name="Yang F."/>
            <person name="Schuster S.C."/>
            <person name="Carter N.P."/>
            <person name="Harrow J."/>
            <person name="Ning Z."/>
            <person name="Herrero J."/>
            <person name="Searle S.M."/>
            <person name="Enright A."/>
            <person name="Geisler R."/>
            <person name="Plasterk R.H."/>
            <person name="Lee C."/>
            <person name="Westerfield M."/>
            <person name="de Jong P.J."/>
            <person name="Zon L.I."/>
            <person name="Postlethwait J.H."/>
            <person name="Nusslein-Volhard C."/>
            <person name="Hubbard T.J."/>
            <person name="Roest Crollius H."/>
            <person name="Rogers J."/>
            <person name="Stemple D.L."/>
        </authorList>
    </citation>
    <scope>NUCLEOTIDE SEQUENCE [LARGE SCALE GENOMIC DNA]</scope>
    <source>
        <strain>Tuebingen</strain>
    </source>
</reference>
<reference key="2">
    <citation type="submission" date="2007-12" db="EMBL/GenBank/DDBJ databases">
        <authorList>
            <consortium name="NIH - Zebrafish Gene Collection (ZGC) project"/>
        </authorList>
    </citation>
    <scope>NUCLEOTIDE SEQUENCE [LARGE SCALE MRNA]</scope>
</reference>
<reference key="3">
    <citation type="journal article" date="2011" name="PLoS ONE">
        <title>liver-enriched gene 1a and 1b encode novel secretory proteins essential for normal liver development in zebrafish.</title>
        <authorList>
            <person name="Chang C."/>
            <person name="Hu M."/>
            <person name="Zhu Z."/>
            <person name="Lo L.J."/>
            <person name="Chen J."/>
            <person name="Peng J."/>
        </authorList>
    </citation>
    <scope>FUNCTION</scope>
    <scope>DEVELOPMENTAL STAGE</scope>
    <scope>TISSUE SPECIFICITY</scope>
    <scope>SUBCELLULAR LOCATION</scope>
    <scope>DISRUPTION PHENOTYPE</scope>
</reference>
<dbReference type="EMBL" id="AL954182">
    <property type="status" value="NOT_ANNOTATED_CDS"/>
    <property type="molecule type" value="Genomic_DNA"/>
</dbReference>
<dbReference type="EMBL" id="BC155632">
    <property type="protein sequence ID" value="AAI55633.1"/>
    <property type="molecule type" value="mRNA"/>
</dbReference>
<dbReference type="RefSeq" id="NP_001093526.1">
    <property type="nucleotide sequence ID" value="NM_001100056.2"/>
</dbReference>
<dbReference type="SMR" id="A5PF61"/>
<dbReference type="FunCoup" id="A5PF61">
    <property type="interactions" value="1780"/>
</dbReference>
<dbReference type="STRING" id="7955.ENSDARP00000064418"/>
<dbReference type="GlyCosmos" id="A5PF61">
    <property type="glycosylation" value="1 site, No reported glycans"/>
</dbReference>
<dbReference type="PaxDb" id="7955-ENSDARP00000064418"/>
<dbReference type="PeptideAtlas" id="A5PF61"/>
<dbReference type="Ensembl" id="ENSDART00000064419">
    <property type="protein sequence ID" value="ENSDARP00000064418"/>
    <property type="gene ID" value="ENSDARG00000090722"/>
</dbReference>
<dbReference type="GeneID" id="796447"/>
<dbReference type="KEGG" id="dre:796447"/>
<dbReference type="AGR" id="ZFIN:ZDB-GENE-030131-1178"/>
<dbReference type="CTD" id="796447"/>
<dbReference type="ZFIN" id="ZDB-GENE-030131-1178">
    <property type="gene designation" value="leg1.1"/>
</dbReference>
<dbReference type="eggNOG" id="ENOG502R60Y">
    <property type="taxonomic scope" value="Eukaryota"/>
</dbReference>
<dbReference type="HOGENOM" id="CLU_071068_0_0_1"/>
<dbReference type="InParanoid" id="A5PF61"/>
<dbReference type="OMA" id="PKLMDDW"/>
<dbReference type="OrthoDB" id="17046at2759"/>
<dbReference type="PhylomeDB" id="A5PF61"/>
<dbReference type="TreeFam" id="TF332991"/>
<dbReference type="PRO" id="PR:A5PF61"/>
<dbReference type="Proteomes" id="UP000000437">
    <property type="component" value="Chromosome 20"/>
</dbReference>
<dbReference type="Bgee" id="ENSDARG00000090722">
    <property type="expression patterns" value="Expressed in liver and 16 other cell types or tissues"/>
</dbReference>
<dbReference type="GO" id="GO:0005615">
    <property type="term" value="C:extracellular space"/>
    <property type="evidence" value="ECO:0000314"/>
    <property type="project" value="ZFIN"/>
</dbReference>
<dbReference type="GO" id="GO:0055123">
    <property type="term" value="P:digestive system development"/>
    <property type="evidence" value="ECO:0000315"/>
    <property type="project" value="ZFIN"/>
</dbReference>
<dbReference type="GO" id="GO:1990402">
    <property type="term" value="P:embryonic liver development"/>
    <property type="evidence" value="ECO:0000315"/>
    <property type="project" value="ZFIN"/>
</dbReference>
<dbReference type="GO" id="GO:0001889">
    <property type="term" value="P:liver development"/>
    <property type="evidence" value="ECO:0000315"/>
    <property type="project" value="ZFIN"/>
</dbReference>
<dbReference type="InterPro" id="IPR008499">
    <property type="entry name" value="Leg1"/>
</dbReference>
<dbReference type="PANTHER" id="PTHR18820">
    <property type="entry name" value="LEG1"/>
    <property type="match status" value="1"/>
</dbReference>
<dbReference type="PANTHER" id="PTHR18820:SF1">
    <property type="entry name" value="PROTEIN LEG1 HOMOLOG"/>
    <property type="match status" value="1"/>
</dbReference>
<dbReference type="Pfam" id="PF05612">
    <property type="entry name" value="Leg1"/>
    <property type="match status" value="1"/>
</dbReference>